<gene>
    <name type="primary">PMY</name>
</gene>
<sequence>MSESHVKISRTIIRGTSPSTVRLESRVRELEDLLDLERDARVRAERNANEMSIQLDTMAERLDELSGTSSQTHDAIRRKDMEISKLRKDLENANAAFETAEATLRRKHNTMISEISSEVENLQKQKGRAEKDKSQLMLEIDNVLGQLDGALKAKASAESKLEGLDSQLTRLKALTDDLQRQMADANSAKSRLAAENFELVRANQEYEAQVVTFSKTKAALESQLDDLKRAMDEDARNRLNLQTQLSSLQMDYDNLQARYEEEAEAAGNLRNQVAKFNADMAALKTRLERELMAKTEEFEELKRKLTVRITELEDMAEHERTRANNLEKTKVKLTLEIKDLQAENEALAAENGELTHRVKQAENLANELQRRIDEMTVEINTLNSANSALEADNMRLKGQVGDLTDRIANLDRENRQLGDQLKETKSALRDANRRLTDLEALRSQLEAERDNLASALHDAEEALKEMEAKYVASQNALNHLKSEMEQRLREKDEELENLRKSTTRTIEELTTTISEMEVRFKSDMSRLKKKYEATISELEVQLDVANKANANLNRENKTLAQRVQELQAALEDERRAREAAESNLQVSERKRIALASEVEEIRSQLELSDRARKNAESELNDANGRISELTLSVNTLTNDKRRLEGDIGVMQGDLDEAVNARKAAEDRADRLNAEVLRLADELRQEQENYXRAETLRKQLEIEIREITVKLEEAEAFATREGRRMVQKLQNRVRELEAELDGEIRRAKEAFANARKYERQFKELQTQSEDDKRMILELQDLLDKTQIKMKAYKRQLEEQEEVSQLTMSKYRKAQQQIEEAEHRADMAERTITIKRTIGGPGSRAVSVVREINSVSRGNRATSIM</sequence>
<reference key="1">
    <citation type="journal article" date="2003" name="Parasitol. Res.">
        <title>Cloning and characterization of Taenia saginata paramyosin cDNA.</title>
        <authorList>
            <person name="Ferrer E."/>
            <person name="Moyano E."/>
            <person name="Benitez L."/>
            <person name="Gonzalez L.M."/>
            <person name="Bryce D."/>
            <person name="Foster-Cuevas M."/>
            <person name="Davila I."/>
            <person name="Cortez M.M."/>
            <person name="Harrison L.J.S."/>
            <person name="Parkhouse R.M.E."/>
            <person name="Garate T."/>
        </authorList>
    </citation>
    <scope>NUCLEOTIDE SEQUENCE [MRNA]</scope>
</reference>
<proteinExistence type="evidence at transcript level"/>
<comment type="function">
    <text>Paramyosin is a major structural component of many thick filaments isolated from invertebrate muscles.</text>
</comment>
<comment type="subunit">
    <text evidence="1">Homodimer.</text>
</comment>
<comment type="subcellular location">
    <subcellularLocation>
        <location>Cytoplasm</location>
        <location>Myofibril</location>
    </subcellularLocation>
    <text>Thick filaments of the myofibrils.</text>
</comment>
<comment type="similarity">
    <text evidence="3">Belongs to the paramyosin family.</text>
</comment>
<accession>Q8T305</accession>
<keyword id="KW-0175">Coiled coil</keyword>
<keyword id="KW-0963">Cytoplasm</keyword>
<keyword id="KW-0505">Motor protein</keyword>
<keyword id="KW-0514">Muscle protein</keyword>
<keyword id="KW-0518">Myosin</keyword>
<keyword id="KW-0787">Thick filament</keyword>
<feature type="chain" id="PRO_0000211258" description="Paramyosin">
    <location>
        <begin position="1"/>
        <end position="863"/>
    </location>
</feature>
<feature type="region of interest" description="Nonhelical region" evidence="2">
    <location>
        <begin position="1"/>
        <end position="18"/>
    </location>
</feature>
<feature type="region of interest" description="Nonhelical region" evidence="2">
    <location>
        <begin position="837"/>
        <end position="863"/>
    </location>
</feature>
<feature type="coiled-coil region" evidence="2">
    <location>
        <begin position="19"/>
        <end position="836"/>
    </location>
</feature>
<protein>
    <recommendedName>
        <fullName>Paramyosin</fullName>
    </recommendedName>
</protein>
<name>MYSP_TAESA</name>
<evidence type="ECO:0000250" key="1"/>
<evidence type="ECO:0000255" key="2"/>
<evidence type="ECO:0000305" key="3"/>
<dbReference type="EMBL" id="AJ439882">
    <property type="protein sequence ID" value="CAD29167.1"/>
    <property type="molecule type" value="mRNA"/>
</dbReference>
<dbReference type="GO" id="GO:0030016">
    <property type="term" value="C:myofibril"/>
    <property type="evidence" value="ECO:0007669"/>
    <property type="project" value="UniProtKB-SubCell"/>
</dbReference>
<dbReference type="GO" id="GO:0016459">
    <property type="term" value="C:myosin complex"/>
    <property type="evidence" value="ECO:0007669"/>
    <property type="project" value="UniProtKB-KW"/>
</dbReference>
<dbReference type="GO" id="GO:0032982">
    <property type="term" value="C:myosin filament"/>
    <property type="evidence" value="ECO:0007669"/>
    <property type="project" value="UniProtKB-KW"/>
</dbReference>
<dbReference type="Gene3D" id="1.20.5.340">
    <property type="match status" value="3"/>
</dbReference>
<dbReference type="Gene3D" id="1.20.5.370">
    <property type="match status" value="1"/>
</dbReference>
<dbReference type="Gene3D" id="1.20.5.1160">
    <property type="entry name" value="Vasodilator-stimulated phosphoprotein"/>
    <property type="match status" value="1"/>
</dbReference>
<dbReference type="InterPro" id="IPR002928">
    <property type="entry name" value="Myosin_tail"/>
</dbReference>
<dbReference type="InterPro" id="IPR014751">
    <property type="entry name" value="XRCC4-like_C"/>
</dbReference>
<dbReference type="PANTHER" id="PTHR46349">
    <property type="entry name" value="CINGULIN-LIKE PROTEIN 1-RELATED"/>
    <property type="match status" value="1"/>
</dbReference>
<dbReference type="PANTHER" id="PTHR46349:SF6">
    <property type="entry name" value="MYOSIN-6-LIKE"/>
    <property type="match status" value="1"/>
</dbReference>
<dbReference type="Pfam" id="PF01576">
    <property type="entry name" value="Myosin_tail_1"/>
    <property type="match status" value="1"/>
</dbReference>
<dbReference type="SUPFAM" id="SSF90257">
    <property type="entry name" value="Myosin rod fragments"/>
    <property type="match status" value="3"/>
</dbReference>
<organism>
    <name type="scientific">Taenia saginata</name>
    <name type="common">Beef tapeworm</name>
    <name type="synonym">Cysticercus bovis</name>
    <dbReference type="NCBI Taxonomy" id="6206"/>
    <lineage>
        <taxon>Eukaryota</taxon>
        <taxon>Metazoa</taxon>
        <taxon>Spiralia</taxon>
        <taxon>Lophotrochozoa</taxon>
        <taxon>Platyhelminthes</taxon>
        <taxon>Cestoda</taxon>
        <taxon>Eucestoda</taxon>
        <taxon>Cyclophyllidea</taxon>
        <taxon>Taeniidae</taxon>
        <taxon>Taenia</taxon>
    </lineage>
</organism>